<reference key="1">
    <citation type="journal article" date="2003" name="Mol. Biol. Evol.">
        <title>The basic helix-loop-helix transcription factor family in plants: a genome-wide study of protein structure and functional diversity.</title>
        <authorList>
            <person name="Heim M.A."/>
            <person name="Jakoby M."/>
            <person name="Werber M."/>
            <person name="Martin C."/>
            <person name="Weisshaar B."/>
            <person name="Bailey P.C."/>
        </authorList>
    </citation>
    <scope>NUCLEOTIDE SEQUENCE [MRNA]</scope>
    <scope>TISSUE SPECIFICITY</scope>
    <scope>GENE FAMILY</scope>
    <scope>NOMENCLATURE</scope>
    <source>
        <strain>cv. Columbia</strain>
    </source>
</reference>
<reference key="2">
    <citation type="journal article" date="2000" name="Nature">
        <title>Sequence and analysis of chromosome 1 of the plant Arabidopsis thaliana.</title>
        <authorList>
            <person name="Theologis A."/>
            <person name="Ecker J.R."/>
            <person name="Palm C.J."/>
            <person name="Federspiel N.A."/>
            <person name="Kaul S."/>
            <person name="White O."/>
            <person name="Alonso J."/>
            <person name="Altafi H."/>
            <person name="Araujo R."/>
            <person name="Bowman C.L."/>
            <person name="Brooks S.Y."/>
            <person name="Buehler E."/>
            <person name="Chan A."/>
            <person name="Chao Q."/>
            <person name="Chen H."/>
            <person name="Cheuk R.F."/>
            <person name="Chin C.W."/>
            <person name="Chung M.K."/>
            <person name="Conn L."/>
            <person name="Conway A.B."/>
            <person name="Conway A.R."/>
            <person name="Creasy T.H."/>
            <person name="Dewar K."/>
            <person name="Dunn P."/>
            <person name="Etgu P."/>
            <person name="Feldblyum T.V."/>
            <person name="Feng J.-D."/>
            <person name="Fong B."/>
            <person name="Fujii C.Y."/>
            <person name="Gill J.E."/>
            <person name="Goldsmith A.D."/>
            <person name="Haas B."/>
            <person name="Hansen N.F."/>
            <person name="Hughes B."/>
            <person name="Huizar L."/>
            <person name="Hunter J.L."/>
            <person name="Jenkins J."/>
            <person name="Johnson-Hopson C."/>
            <person name="Khan S."/>
            <person name="Khaykin E."/>
            <person name="Kim C.J."/>
            <person name="Koo H.L."/>
            <person name="Kremenetskaia I."/>
            <person name="Kurtz D.B."/>
            <person name="Kwan A."/>
            <person name="Lam B."/>
            <person name="Langin-Hooper S."/>
            <person name="Lee A."/>
            <person name="Lee J.M."/>
            <person name="Lenz C.A."/>
            <person name="Li J.H."/>
            <person name="Li Y.-P."/>
            <person name="Lin X."/>
            <person name="Liu S.X."/>
            <person name="Liu Z.A."/>
            <person name="Luros J.S."/>
            <person name="Maiti R."/>
            <person name="Marziali A."/>
            <person name="Militscher J."/>
            <person name="Miranda M."/>
            <person name="Nguyen M."/>
            <person name="Nierman W.C."/>
            <person name="Osborne B.I."/>
            <person name="Pai G."/>
            <person name="Peterson J."/>
            <person name="Pham P.K."/>
            <person name="Rizzo M."/>
            <person name="Rooney T."/>
            <person name="Rowley D."/>
            <person name="Sakano H."/>
            <person name="Salzberg S.L."/>
            <person name="Schwartz J.R."/>
            <person name="Shinn P."/>
            <person name="Southwick A.M."/>
            <person name="Sun H."/>
            <person name="Tallon L.J."/>
            <person name="Tambunga G."/>
            <person name="Toriumi M.J."/>
            <person name="Town C.D."/>
            <person name="Utterback T."/>
            <person name="Van Aken S."/>
            <person name="Vaysberg M."/>
            <person name="Vysotskaia V.S."/>
            <person name="Walker M."/>
            <person name="Wu D."/>
            <person name="Yu G."/>
            <person name="Fraser C.M."/>
            <person name="Venter J.C."/>
            <person name="Davis R.W."/>
        </authorList>
    </citation>
    <scope>NUCLEOTIDE SEQUENCE [LARGE SCALE GENOMIC DNA]</scope>
    <source>
        <strain>cv. Columbia</strain>
    </source>
</reference>
<reference key="3">
    <citation type="journal article" date="2017" name="Plant J.">
        <title>Araport11: a complete reannotation of the Arabidopsis thaliana reference genome.</title>
        <authorList>
            <person name="Cheng C.Y."/>
            <person name="Krishnakumar V."/>
            <person name="Chan A.P."/>
            <person name="Thibaud-Nissen F."/>
            <person name="Schobel S."/>
            <person name="Town C.D."/>
        </authorList>
    </citation>
    <scope>GENOME REANNOTATION</scope>
    <source>
        <strain>cv. Columbia</strain>
    </source>
</reference>
<reference key="4">
    <citation type="journal article" date="2003" name="Plant Cell">
        <title>The Arabidopsis basic/helix-loop-helix transcription factor family.</title>
        <authorList>
            <person name="Toledo-Ortiz G."/>
            <person name="Huq E."/>
            <person name="Quail P.H."/>
        </authorList>
    </citation>
    <scope>GENE FAMILY</scope>
</reference>
<reference key="5">
    <citation type="journal article" date="2003" name="Plant Cell">
        <title>Update on the basic helix-loop-helix transcription factor gene family in Arabidopsis thaliana.</title>
        <authorList>
            <person name="Bailey P.C."/>
            <person name="Martin C."/>
            <person name="Toledo-Ortiz G."/>
            <person name="Quail P.H."/>
            <person name="Huq E."/>
            <person name="Heim M.A."/>
            <person name="Jakoby M."/>
            <person name="Werber M."/>
            <person name="Weisshaar B."/>
        </authorList>
    </citation>
    <scope>GENE FAMILY</scope>
    <scope>NOMENCLATURE</scope>
</reference>
<comment type="subunit">
    <text evidence="3">Homodimer.</text>
</comment>
<comment type="subcellular location">
    <subcellularLocation>
        <location evidence="1">Nucleus</location>
    </subcellularLocation>
</comment>
<comment type="tissue specificity">
    <text evidence="2">Expressed constitutively in roots, leaves, stems, and flowers.</text>
</comment>
<organism>
    <name type="scientific">Arabidopsis thaliana</name>
    <name type="common">Mouse-ear cress</name>
    <dbReference type="NCBI Taxonomy" id="3702"/>
    <lineage>
        <taxon>Eukaryota</taxon>
        <taxon>Viridiplantae</taxon>
        <taxon>Streptophyta</taxon>
        <taxon>Embryophyta</taxon>
        <taxon>Tracheophyta</taxon>
        <taxon>Spermatophyta</taxon>
        <taxon>Magnoliopsida</taxon>
        <taxon>eudicotyledons</taxon>
        <taxon>Gunneridae</taxon>
        <taxon>Pentapetalae</taxon>
        <taxon>rosids</taxon>
        <taxon>malvids</taxon>
        <taxon>Brassicales</taxon>
        <taxon>Brassicaceae</taxon>
        <taxon>Camelineae</taxon>
        <taxon>Arabidopsis</taxon>
    </lineage>
</organism>
<feature type="chain" id="PRO_0000358749" description="Transcription factor bHLH52">
    <location>
        <begin position="1"/>
        <end position="264"/>
    </location>
</feature>
<feature type="domain" description="bHLH" evidence="1">
    <location>
        <begin position="134"/>
        <end position="183"/>
    </location>
</feature>
<feature type="sequence conflict" description="In Ref. 1; AAM10944." evidence="3" ref="1">
    <original>LPS</original>
    <variation>PPG</variation>
    <location>
        <begin position="51"/>
        <end position="53"/>
    </location>
</feature>
<sequence>MIIPETDSFFFQEQPQHQPLYPDEALSPSLFGFDHYDHFYESFLPSQEIFLPSPKTRVFNESQELDSFHTPKHQKLIDSSFHFNSHDPFSPSPESNYLLDSYITEASNISKFQAPDFSSTFKVGWTEQGDTKKRELSAQSIAARKRRRRITEKTQELGKLIPGSQKHNTAEMFNAAAKYVKFLQAQIEILQLKQTKMQTLDSSKVGREMQFLLGSQEIQEKLSTEEVCVVPREMVQVLKAEECILTNPKISRDINKLLSTNLMN</sequence>
<name>BH052_ARATH</name>
<evidence type="ECO:0000255" key="1">
    <source>
        <dbReference type="PROSITE-ProRule" id="PRU00981"/>
    </source>
</evidence>
<evidence type="ECO:0000269" key="2">
    <source>
    </source>
</evidence>
<evidence type="ECO:0000305" key="3"/>
<dbReference type="EMBL" id="AF488587">
    <property type="protein sequence ID" value="AAM10944.1"/>
    <property type="molecule type" value="mRNA"/>
</dbReference>
<dbReference type="EMBL" id="AC007060">
    <property type="protein sequence ID" value="AAD25754.1"/>
    <property type="molecule type" value="Genomic_DNA"/>
</dbReference>
<dbReference type="EMBL" id="CP002684">
    <property type="protein sequence ID" value="AEE31258.1"/>
    <property type="molecule type" value="Genomic_DNA"/>
</dbReference>
<dbReference type="PIR" id="B86432">
    <property type="entry name" value="B86432"/>
</dbReference>
<dbReference type="RefSeq" id="NP_174355.1">
    <property type="nucleotide sequence ID" value="NM_102804.2"/>
</dbReference>
<dbReference type="SMR" id="Q9SA82"/>
<dbReference type="FunCoup" id="Q9SA82">
    <property type="interactions" value="106"/>
</dbReference>
<dbReference type="STRING" id="3702.Q9SA82"/>
<dbReference type="PaxDb" id="3702-AT1G30670.1"/>
<dbReference type="EnsemblPlants" id="AT1G30670.1">
    <property type="protein sequence ID" value="AT1G30670.1"/>
    <property type="gene ID" value="AT1G30670"/>
</dbReference>
<dbReference type="GeneID" id="839947"/>
<dbReference type="Gramene" id="AT1G30670.1">
    <property type="protein sequence ID" value="AT1G30670.1"/>
    <property type="gene ID" value="AT1G30670"/>
</dbReference>
<dbReference type="KEGG" id="ath:AT1G30670"/>
<dbReference type="Araport" id="AT1G30670"/>
<dbReference type="TAIR" id="AT1G30670"/>
<dbReference type="eggNOG" id="ENOG502S03F">
    <property type="taxonomic scope" value="Eukaryota"/>
</dbReference>
<dbReference type="HOGENOM" id="CLU_083453_0_0_1"/>
<dbReference type="InParanoid" id="Q9SA82"/>
<dbReference type="OMA" id="HNTAEMF"/>
<dbReference type="PhylomeDB" id="Q9SA82"/>
<dbReference type="PRO" id="PR:Q9SA82"/>
<dbReference type="Proteomes" id="UP000006548">
    <property type="component" value="Chromosome 1"/>
</dbReference>
<dbReference type="ExpressionAtlas" id="Q9SA82">
    <property type="expression patterns" value="baseline"/>
</dbReference>
<dbReference type="GO" id="GO:0005634">
    <property type="term" value="C:nucleus"/>
    <property type="evidence" value="ECO:0007005"/>
    <property type="project" value="TAIR"/>
</dbReference>
<dbReference type="GO" id="GO:0003677">
    <property type="term" value="F:DNA binding"/>
    <property type="evidence" value="ECO:0007669"/>
    <property type="project" value="UniProtKB-KW"/>
</dbReference>
<dbReference type="GO" id="GO:0003700">
    <property type="term" value="F:DNA-binding transcription factor activity"/>
    <property type="evidence" value="ECO:0000250"/>
    <property type="project" value="TAIR"/>
</dbReference>
<dbReference type="GO" id="GO:0046983">
    <property type="term" value="F:protein dimerization activity"/>
    <property type="evidence" value="ECO:0007669"/>
    <property type="project" value="InterPro"/>
</dbReference>
<dbReference type="GO" id="GO:0006355">
    <property type="term" value="P:regulation of DNA-templated transcription"/>
    <property type="evidence" value="ECO:0000304"/>
    <property type="project" value="TAIR"/>
</dbReference>
<dbReference type="CDD" id="cd11393">
    <property type="entry name" value="bHLH_AtbHLH_like"/>
    <property type="match status" value="1"/>
</dbReference>
<dbReference type="FunFam" id="4.10.280.10:FF:000137">
    <property type="entry name" value="Transcription factor bHLH52"/>
    <property type="match status" value="1"/>
</dbReference>
<dbReference type="Gene3D" id="4.10.280.10">
    <property type="entry name" value="Helix-loop-helix DNA-binding domain"/>
    <property type="match status" value="1"/>
</dbReference>
<dbReference type="InterPro" id="IPR045239">
    <property type="entry name" value="bHLH95_bHLH"/>
</dbReference>
<dbReference type="InterPro" id="IPR011598">
    <property type="entry name" value="bHLH_dom"/>
</dbReference>
<dbReference type="InterPro" id="IPR036638">
    <property type="entry name" value="HLH_DNA-bd_sf"/>
</dbReference>
<dbReference type="InterPro" id="IPR045843">
    <property type="entry name" value="IND-like"/>
</dbReference>
<dbReference type="PANTHER" id="PTHR16223:SF49">
    <property type="entry name" value="TRANSCRIPTION FACTOR BHLH52-RELATED"/>
    <property type="match status" value="1"/>
</dbReference>
<dbReference type="PANTHER" id="PTHR16223">
    <property type="entry name" value="TRANSCRIPTION FACTOR BHLH83-RELATED"/>
    <property type="match status" value="1"/>
</dbReference>
<dbReference type="Pfam" id="PF00010">
    <property type="entry name" value="HLH"/>
    <property type="match status" value="1"/>
</dbReference>
<dbReference type="SMART" id="SM00353">
    <property type="entry name" value="HLH"/>
    <property type="match status" value="1"/>
</dbReference>
<dbReference type="SUPFAM" id="SSF47459">
    <property type="entry name" value="HLH, helix-loop-helix DNA-binding domain"/>
    <property type="match status" value="1"/>
</dbReference>
<dbReference type="PROSITE" id="PS50888">
    <property type="entry name" value="BHLH"/>
    <property type="match status" value="1"/>
</dbReference>
<proteinExistence type="evidence at transcript level"/>
<protein>
    <recommendedName>
        <fullName>Transcription factor bHLH52</fullName>
    </recommendedName>
    <alternativeName>
        <fullName>Basic helix-loop-helix protein 52</fullName>
        <shortName>AtbHLH52</shortName>
        <shortName>bHLH 52</shortName>
    </alternativeName>
    <alternativeName>
        <fullName>Transcription factor EN 124</fullName>
    </alternativeName>
    <alternativeName>
        <fullName>bHLH transcription factor bHLH052</fullName>
    </alternativeName>
</protein>
<accession>Q9SA82</accession>
<accession>Q8S3E6</accession>
<keyword id="KW-0238">DNA-binding</keyword>
<keyword id="KW-0539">Nucleus</keyword>
<keyword id="KW-1185">Reference proteome</keyword>
<keyword id="KW-0804">Transcription</keyword>
<keyword id="KW-0805">Transcription regulation</keyword>
<gene>
    <name type="primary">BHLH52</name>
    <name type="synonym">EN124</name>
    <name type="ordered locus">At1g30670</name>
    <name type="ORF">T5I8.12</name>
</gene>